<protein>
    <recommendedName>
        <fullName evidence="1">Methylenetetrahydrofolate--tRNA-(uracil-5-)-methyltransferase TrmFO</fullName>
        <ecNumber evidence="1">2.1.1.74</ecNumber>
    </recommendedName>
    <alternativeName>
        <fullName evidence="1">Folate-dependent tRNA (uracil-5-)-methyltransferase</fullName>
    </alternativeName>
    <alternativeName>
        <fullName evidence="1">Folate-dependent tRNA(M-5-U54)-methyltransferase</fullName>
    </alternativeName>
</protein>
<keyword id="KW-0963">Cytoplasm</keyword>
<keyword id="KW-0274">FAD</keyword>
<keyword id="KW-0285">Flavoprotein</keyword>
<keyword id="KW-0489">Methyltransferase</keyword>
<keyword id="KW-0520">NAD</keyword>
<keyword id="KW-0521">NADP</keyword>
<keyword id="KW-0808">Transferase</keyword>
<keyword id="KW-0819">tRNA processing</keyword>
<feature type="chain" id="PRO_0000346402" description="Methylenetetrahydrofolate--tRNA-(uracil-5-)-methyltransferase TrmFO">
    <location>
        <begin position="1"/>
        <end position="448"/>
    </location>
</feature>
<feature type="binding site" evidence="1">
    <location>
        <begin position="13"/>
        <end position="18"/>
    </location>
    <ligand>
        <name>FAD</name>
        <dbReference type="ChEBI" id="CHEBI:57692"/>
    </ligand>
</feature>
<comment type="function">
    <text evidence="1">Catalyzes the folate-dependent formation of 5-methyl-uridine at position 54 (M-5-U54) in all tRNAs.</text>
</comment>
<comment type="catalytic activity">
    <reaction evidence="1">
        <text>uridine(54) in tRNA + (6R)-5,10-methylene-5,6,7,8-tetrahydrofolate + NADH + H(+) = 5-methyluridine(54) in tRNA + (6S)-5,6,7,8-tetrahydrofolate + NAD(+)</text>
        <dbReference type="Rhea" id="RHEA:16873"/>
        <dbReference type="Rhea" id="RHEA-COMP:10167"/>
        <dbReference type="Rhea" id="RHEA-COMP:10193"/>
        <dbReference type="ChEBI" id="CHEBI:15378"/>
        <dbReference type="ChEBI" id="CHEBI:15636"/>
        <dbReference type="ChEBI" id="CHEBI:57453"/>
        <dbReference type="ChEBI" id="CHEBI:57540"/>
        <dbReference type="ChEBI" id="CHEBI:57945"/>
        <dbReference type="ChEBI" id="CHEBI:65315"/>
        <dbReference type="ChEBI" id="CHEBI:74447"/>
        <dbReference type="EC" id="2.1.1.74"/>
    </reaction>
</comment>
<comment type="catalytic activity">
    <reaction evidence="1">
        <text>uridine(54) in tRNA + (6R)-5,10-methylene-5,6,7,8-tetrahydrofolate + NADPH + H(+) = 5-methyluridine(54) in tRNA + (6S)-5,6,7,8-tetrahydrofolate + NADP(+)</text>
        <dbReference type="Rhea" id="RHEA:62372"/>
        <dbReference type="Rhea" id="RHEA-COMP:10167"/>
        <dbReference type="Rhea" id="RHEA-COMP:10193"/>
        <dbReference type="ChEBI" id="CHEBI:15378"/>
        <dbReference type="ChEBI" id="CHEBI:15636"/>
        <dbReference type="ChEBI" id="CHEBI:57453"/>
        <dbReference type="ChEBI" id="CHEBI:57783"/>
        <dbReference type="ChEBI" id="CHEBI:58349"/>
        <dbReference type="ChEBI" id="CHEBI:65315"/>
        <dbReference type="ChEBI" id="CHEBI:74447"/>
        <dbReference type="EC" id="2.1.1.74"/>
    </reaction>
</comment>
<comment type="cofactor">
    <cofactor evidence="1">
        <name>FAD</name>
        <dbReference type="ChEBI" id="CHEBI:57692"/>
    </cofactor>
</comment>
<comment type="subcellular location">
    <subcellularLocation>
        <location evidence="1">Cytoplasm</location>
    </subcellularLocation>
</comment>
<comment type="similarity">
    <text evidence="1">Belongs to the MnmG family. TrmFO subfamily.</text>
</comment>
<comment type="sequence caution" evidence="2">
    <conflict type="erroneous initiation">
        <sequence resource="EMBL-CDS" id="AAX71979"/>
    </conflict>
</comment>
<reference key="1">
    <citation type="journal article" date="2005" name="J. Infect. Dis.">
        <title>Genome sequence of a serotype M28 strain of group A Streptococcus: potential new insights into puerperal sepsis and bacterial disease specificity.</title>
        <authorList>
            <person name="Green N.M."/>
            <person name="Zhang S."/>
            <person name="Porcella S.F."/>
            <person name="Nagiec M.J."/>
            <person name="Barbian K.D."/>
            <person name="Beres S.B."/>
            <person name="Lefebvre R.B."/>
            <person name="Musser J.M."/>
        </authorList>
    </citation>
    <scope>NUCLEOTIDE SEQUENCE [LARGE SCALE GENOMIC DNA]</scope>
    <source>
        <strain>MGAS6180</strain>
    </source>
</reference>
<proteinExistence type="inferred from homology"/>
<dbReference type="EC" id="2.1.1.74" evidence="1"/>
<dbReference type="EMBL" id="CP000056">
    <property type="protein sequence ID" value="AAX71979.1"/>
    <property type="status" value="ALT_INIT"/>
    <property type="molecule type" value="Genomic_DNA"/>
</dbReference>
<dbReference type="RefSeq" id="WP_021340800.1">
    <property type="nucleotide sequence ID" value="NC_007296.2"/>
</dbReference>
<dbReference type="SMR" id="Q48TI1"/>
<dbReference type="KEGG" id="spb:M28_Spy0866"/>
<dbReference type="HOGENOM" id="CLU_033057_1_0_9"/>
<dbReference type="GO" id="GO:0005829">
    <property type="term" value="C:cytosol"/>
    <property type="evidence" value="ECO:0007669"/>
    <property type="project" value="TreeGrafter"/>
</dbReference>
<dbReference type="GO" id="GO:0050660">
    <property type="term" value="F:flavin adenine dinucleotide binding"/>
    <property type="evidence" value="ECO:0007669"/>
    <property type="project" value="UniProtKB-UniRule"/>
</dbReference>
<dbReference type="GO" id="GO:0047151">
    <property type="term" value="F:tRNA (uracil(54)-C5)-methyltransferase activity, 5,10-methylenetetrahydrofolate-dependent"/>
    <property type="evidence" value="ECO:0007669"/>
    <property type="project" value="UniProtKB-UniRule"/>
</dbReference>
<dbReference type="GO" id="GO:0030488">
    <property type="term" value="P:tRNA methylation"/>
    <property type="evidence" value="ECO:0007669"/>
    <property type="project" value="TreeGrafter"/>
</dbReference>
<dbReference type="GO" id="GO:0002098">
    <property type="term" value="P:tRNA wobble uridine modification"/>
    <property type="evidence" value="ECO:0007669"/>
    <property type="project" value="TreeGrafter"/>
</dbReference>
<dbReference type="FunFam" id="3.50.50.60:FF:000035">
    <property type="entry name" value="Methylenetetrahydrofolate--tRNA-(uracil-5-)-methyltransferase TrmFO"/>
    <property type="match status" value="1"/>
</dbReference>
<dbReference type="FunFam" id="3.50.50.60:FF:000040">
    <property type="entry name" value="Methylenetetrahydrofolate--tRNA-(uracil-5-)-methyltransferase TrmFO"/>
    <property type="match status" value="1"/>
</dbReference>
<dbReference type="Gene3D" id="3.50.50.60">
    <property type="entry name" value="FAD/NAD(P)-binding domain"/>
    <property type="match status" value="2"/>
</dbReference>
<dbReference type="HAMAP" id="MF_01037">
    <property type="entry name" value="TrmFO"/>
    <property type="match status" value="1"/>
</dbReference>
<dbReference type="InterPro" id="IPR036188">
    <property type="entry name" value="FAD/NAD-bd_sf"/>
</dbReference>
<dbReference type="InterPro" id="IPR002218">
    <property type="entry name" value="MnmG-rel"/>
</dbReference>
<dbReference type="InterPro" id="IPR020595">
    <property type="entry name" value="MnmG-rel_CS"/>
</dbReference>
<dbReference type="InterPro" id="IPR040131">
    <property type="entry name" value="MnmG_N"/>
</dbReference>
<dbReference type="InterPro" id="IPR004417">
    <property type="entry name" value="TrmFO"/>
</dbReference>
<dbReference type="NCBIfam" id="TIGR00137">
    <property type="entry name" value="gid_trmFO"/>
    <property type="match status" value="1"/>
</dbReference>
<dbReference type="NCBIfam" id="NF003739">
    <property type="entry name" value="PRK05335.1"/>
    <property type="match status" value="1"/>
</dbReference>
<dbReference type="PANTHER" id="PTHR11806">
    <property type="entry name" value="GLUCOSE INHIBITED DIVISION PROTEIN A"/>
    <property type="match status" value="1"/>
</dbReference>
<dbReference type="PANTHER" id="PTHR11806:SF2">
    <property type="entry name" value="METHYLENETETRAHYDROFOLATE--TRNA-(URACIL-5-)-METHYLTRANSFERASE TRMFO"/>
    <property type="match status" value="1"/>
</dbReference>
<dbReference type="Pfam" id="PF01134">
    <property type="entry name" value="GIDA"/>
    <property type="match status" value="1"/>
</dbReference>
<dbReference type="SUPFAM" id="SSF51905">
    <property type="entry name" value="FAD/NAD(P)-binding domain"/>
    <property type="match status" value="1"/>
</dbReference>
<dbReference type="PROSITE" id="PS01281">
    <property type="entry name" value="GIDA_2"/>
    <property type="match status" value="1"/>
</dbReference>
<name>TRMFO_STRPM</name>
<evidence type="ECO:0000255" key="1">
    <source>
        <dbReference type="HAMAP-Rule" id="MF_01037"/>
    </source>
</evidence>
<evidence type="ECO:0000305" key="2"/>
<accession>Q48TI1</accession>
<gene>
    <name evidence="1" type="primary">trmFO</name>
    <name type="ordered locus">M28_Spy0866</name>
</gene>
<sequence length="448" mass="49481">MSQSTATYINVIGAGLAGSEAAYQIAKRGIPVKLYEMRGVKATPQHKTTNFAELVCSNSFRGDSLTNAVGLLKEEMRRLDSIIMRNGEANRVPAGGAMAVDREGYAKSVTAELENHPLIEVIRDEITEIPDDAITVIATGPLTSDALAEKIHALNGGDGFYFYDAAAPIIDKSTIDMSKVYLKSRYDKGEAAYLNCPMTKEEFMAFHDALTNAEEAPLNAFEKEKYFEGCMPIEVMAKRGIKTMLYGPMKPVGLEYPDDYTGPRDGEFKTPYAVVQLRQDNAAGSLYNIVGFQTHLKWGEQKRVFQMIPGLENAEFVRYGVMHRNSYMDSPNLLTETFQSRNNPNLFFAGQMTGVEGYVESAASGLVAGTNAARLFKREEALVFPQTTAIGSLPHYVTHADSKHFQPMNVNFGIIKELEGPRIRDKKERYEAIASRALADLDTCLASL</sequence>
<organism>
    <name type="scientific">Streptococcus pyogenes serotype M28 (strain MGAS6180)</name>
    <dbReference type="NCBI Taxonomy" id="319701"/>
    <lineage>
        <taxon>Bacteria</taxon>
        <taxon>Bacillati</taxon>
        <taxon>Bacillota</taxon>
        <taxon>Bacilli</taxon>
        <taxon>Lactobacillales</taxon>
        <taxon>Streptococcaceae</taxon>
        <taxon>Streptococcus</taxon>
    </lineage>
</organism>